<evidence type="ECO:0000250" key="1">
    <source>
        <dbReference type="UniProtKB" id="Q06787"/>
    </source>
</evidence>
<evidence type="ECO:0000255" key="2">
    <source>
        <dbReference type="PROSITE-ProRule" id="PRU00117"/>
    </source>
</evidence>
<evidence type="ECO:0000255" key="3">
    <source>
        <dbReference type="PROSITE-ProRule" id="PRU00973"/>
    </source>
</evidence>
<evidence type="ECO:0000256" key="4">
    <source>
        <dbReference type="SAM" id="MobiDB-lite"/>
    </source>
</evidence>
<evidence type="ECO:0000269" key="5">
    <source>
    </source>
</evidence>
<evidence type="ECO:0000269" key="6">
    <source>
    </source>
</evidence>
<evidence type="ECO:0000269" key="7">
    <source>
    </source>
</evidence>
<evidence type="ECO:0000269" key="8">
    <source>
    </source>
</evidence>
<evidence type="ECO:0000269" key="9">
    <source>
    </source>
</evidence>
<evidence type="ECO:0000269" key="10">
    <source>
    </source>
</evidence>
<evidence type="ECO:0000269" key="11">
    <source>
    </source>
</evidence>
<evidence type="ECO:0000269" key="12">
    <source>
    </source>
</evidence>
<evidence type="ECO:0000269" key="13">
    <source>
    </source>
</evidence>
<evidence type="ECO:0000269" key="14">
    <source>
    </source>
</evidence>
<evidence type="ECO:0000269" key="15">
    <source>
    </source>
</evidence>
<evidence type="ECO:0000269" key="16">
    <source>
    </source>
</evidence>
<evidence type="ECO:0000269" key="17">
    <source>
    </source>
</evidence>
<evidence type="ECO:0000269" key="18">
    <source ref="3"/>
</evidence>
<evidence type="ECO:0000303" key="19">
    <source>
    </source>
</evidence>
<evidence type="ECO:0000303" key="20">
    <source>
    </source>
</evidence>
<evidence type="ECO:0000303" key="21">
    <source>
    </source>
</evidence>
<evidence type="ECO:0000303" key="22">
    <source>
    </source>
</evidence>
<evidence type="ECO:0000303" key="23">
    <source ref="3"/>
</evidence>
<evidence type="ECO:0000303" key="24">
    <source ref="6"/>
</evidence>
<evidence type="ECO:0000305" key="25"/>
<evidence type="ECO:0000312" key="26">
    <source>
        <dbReference type="EMBL" id="AAF14639.1"/>
    </source>
</evidence>
<evidence type="ECO:0000312" key="27">
    <source>
        <dbReference type="EMBL" id="AAF54493.2"/>
    </source>
</evidence>
<evidence type="ECO:0000312" key="28">
    <source>
        <dbReference type="EMBL" id="AAG22045.1"/>
    </source>
</evidence>
<evidence type="ECO:0000312" key="29">
    <source>
        <dbReference type="EMBL" id="AAL39327.2"/>
    </source>
</evidence>
<evidence type="ECO:0000312" key="30">
    <source>
        <dbReference type="EMBL" id="CAB66340.1"/>
    </source>
</evidence>
<evidence type="ECO:0000312" key="31">
    <source>
        <dbReference type="EMBL" id="CAC88757.2"/>
    </source>
</evidence>
<evidence type="ECO:0000312" key="32">
    <source>
        <dbReference type="EMBL" id="CAD19444.1"/>
    </source>
</evidence>
<organism>
    <name type="scientific">Drosophila melanogaster</name>
    <name type="common">Fruit fly</name>
    <dbReference type="NCBI Taxonomy" id="7227"/>
    <lineage>
        <taxon>Eukaryota</taxon>
        <taxon>Metazoa</taxon>
        <taxon>Ecdysozoa</taxon>
        <taxon>Arthropoda</taxon>
        <taxon>Hexapoda</taxon>
        <taxon>Insecta</taxon>
        <taxon>Pterygota</taxon>
        <taxon>Neoptera</taxon>
        <taxon>Endopterygota</taxon>
        <taxon>Diptera</taxon>
        <taxon>Brachycera</taxon>
        <taxon>Muscomorpha</taxon>
        <taxon>Ephydroidea</taxon>
        <taxon>Drosophilidae</taxon>
        <taxon>Drosophila</taxon>
        <taxon>Sophophora</taxon>
    </lineage>
</organism>
<keyword id="KW-0025">Alternative splicing</keyword>
<keyword id="KW-0966">Cell projection</keyword>
<keyword id="KW-0963">Cytoplasm</keyword>
<keyword id="KW-0524">Neurogenesis</keyword>
<keyword id="KW-0597">Phosphoprotein</keyword>
<keyword id="KW-1185">Reference proteome</keyword>
<keyword id="KW-0677">Repeat</keyword>
<keyword id="KW-0678">Repressor</keyword>
<keyword id="KW-0687">Ribonucleoprotein</keyword>
<keyword id="KW-0694">RNA-binding</keyword>
<keyword id="KW-0943">RNA-mediated gene silencing</keyword>
<keyword id="KW-0716">Sensory transduction</keyword>
<keyword id="KW-0770">Synapse</keyword>
<keyword id="KW-0810">Translation regulation</keyword>
<keyword id="KW-0844">Vision</keyword>
<feature type="chain" id="PRO_0000050109" description="Fragile X messenger ribonucleoprotein 1 homolog">
    <location>
        <begin position="1"/>
        <end position="684"/>
    </location>
</feature>
<feature type="domain" description="Agenet-like 1" evidence="3">
    <location>
        <begin position="1"/>
        <end position="49"/>
    </location>
</feature>
<feature type="domain" description="Agenet-like 2" evidence="3">
    <location>
        <begin position="65"/>
        <end position="117"/>
    </location>
</feature>
<feature type="domain" description="KH 1" evidence="2">
    <location>
        <begin position="221"/>
        <end position="282"/>
    </location>
</feature>
<feature type="domain" description="KH 2" evidence="2">
    <location>
        <begin position="284"/>
        <end position="353"/>
    </location>
</feature>
<feature type="region of interest" description="Disordered" evidence="4">
    <location>
        <begin position="386"/>
        <end position="684"/>
    </location>
</feature>
<feature type="region of interest" description="RNA-binding RGG-box">
    <location>
        <begin position="474"/>
        <end position="489"/>
    </location>
</feature>
<feature type="compositionally biased region" description="Polar residues" evidence="4">
    <location>
        <begin position="387"/>
        <end position="398"/>
    </location>
</feature>
<feature type="compositionally biased region" description="Basic and acidic residues" evidence="4">
    <location>
        <begin position="401"/>
        <end position="415"/>
    </location>
</feature>
<feature type="compositionally biased region" description="Gly residues" evidence="4">
    <location>
        <begin position="418"/>
        <end position="441"/>
    </location>
</feature>
<feature type="compositionally biased region" description="Basic and acidic residues" evidence="4">
    <location>
        <begin position="449"/>
        <end position="475"/>
    </location>
</feature>
<feature type="compositionally biased region" description="Gly residues" evidence="4">
    <location>
        <begin position="476"/>
        <end position="493"/>
    </location>
</feature>
<feature type="compositionally biased region" description="Basic and acidic residues" evidence="4">
    <location>
        <begin position="514"/>
        <end position="538"/>
    </location>
</feature>
<feature type="compositionally biased region" description="Low complexity" evidence="4">
    <location>
        <begin position="555"/>
        <end position="581"/>
    </location>
</feature>
<feature type="compositionally biased region" description="Low complexity" evidence="4">
    <location>
        <begin position="588"/>
        <end position="613"/>
    </location>
</feature>
<feature type="compositionally biased region" description="Basic and acidic residues" evidence="4">
    <location>
        <begin position="614"/>
        <end position="623"/>
    </location>
</feature>
<feature type="compositionally biased region" description="Low complexity" evidence="4">
    <location>
        <begin position="625"/>
        <end position="648"/>
    </location>
</feature>
<feature type="compositionally biased region" description="Polar residues" evidence="4">
    <location>
        <begin position="660"/>
        <end position="671"/>
    </location>
</feature>
<feature type="modified residue" description="Phosphoserine" evidence="14">
    <location>
        <position position="403"/>
    </location>
</feature>
<feature type="modified residue" description="Phosphoserine" evidence="14">
    <location>
        <position position="408"/>
    </location>
</feature>
<feature type="modified residue" description="Phosphoserine" evidence="14">
    <location>
        <position position="409"/>
    </location>
</feature>
<feature type="modified residue" description="Phosphoserine" evidence="14">
    <location>
        <position position="413"/>
    </location>
</feature>
<feature type="modified residue" description="Phosphoserine" evidence="14">
    <location>
        <position position="532"/>
    </location>
</feature>
<feature type="modified residue" description="Phosphoserine" evidence="14">
    <location>
        <position position="533"/>
    </location>
</feature>
<feature type="modified residue" description="Phosphoserine" evidence="14">
    <location>
        <position position="539"/>
    </location>
</feature>
<feature type="modified residue" description="Phosphoserine" evidence="14">
    <location>
        <position position="541"/>
    </location>
</feature>
<feature type="splice variant" id="VSP_050783" description="In isoform E." evidence="19">
    <location>
        <begin position="1"/>
        <end position="38"/>
    </location>
</feature>
<feature type="splice variant" id="VSP_050785" description="In isoform B." evidence="23">
    <location>
        <begin position="321"/>
        <end position="330"/>
    </location>
</feature>
<feature type="splice variant" id="VSP_050784" description="In isoform C and isoform E." evidence="19 20 21 23 24">
    <location>
        <begin position="321"/>
        <end position="323"/>
    </location>
</feature>
<feature type="splice variant" id="VSP_050786" description="In isoform B." evidence="23">
    <original>ADS</original>
    <variation>DTN</variation>
    <location>
        <begin position="537"/>
        <end position="539"/>
    </location>
</feature>
<feature type="splice variant" id="VSP_050787" description="In isoform B." evidence="23">
    <location>
        <begin position="540"/>
        <end position="684"/>
    </location>
</feature>
<feature type="mutagenesis site" description="Impairs RNA-binding." evidence="6">
    <original>I</original>
    <variation>N</variation>
    <location>
        <position position="244"/>
    </location>
</feature>
<feature type="mutagenesis site" description="Strongly reduced binding to N6-methyladenosine (m6A)-containing mRNAs." evidence="17">
    <original>V</original>
    <variation>K</variation>
    <location>
        <position position="291"/>
    </location>
</feature>
<feature type="mutagenesis site" description="Strongly reduced binding to N6-methyladenosine (m6A)-containing mRNAs." evidence="17">
    <original>V</original>
    <variation>K</variation>
    <location>
        <position position="299"/>
    </location>
</feature>
<feature type="mutagenesis site" description="Abolished formation of a phase-separated membraneless compartment." evidence="17">
    <original>KN</original>
    <variation>DD</variation>
    <location>
        <begin position="302"/>
        <end position="303"/>
    </location>
</feature>
<feature type="mutagenesis site" description="Impairs RNA-binding. Strongly reduced binding to N6-methyladenosine (m6A)-containing mRNAs." evidence="6 17">
    <original>I</original>
    <variation>N</variation>
    <location>
        <position position="307"/>
    </location>
</feature>
<feature type="mutagenesis site" description="Does not affect binding to N6-methyladenosine (m6A)-containing mRNAs, while reducing binfing t unmodified mRNAs." evidence="17">
    <original>V</original>
    <variation>K</variation>
    <location>
        <position position="311"/>
    </location>
</feature>
<feature type="mutagenesis site" description="Strongly reduced binding to N6-methyladenosine (m6A)-containing mRNAs." evidence="17">
    <original>F</original>
    <variation>N</variation>
    <location>
        <position position="343"/>
    </location>
</feature>
<feature type="mutagenesis site" description="Does not affect binding to N6-methyladenosine (m6A)-containing mRNAs." evidence="17">
    <original>F</original>
    <variation>N</variation>
    <location>
        <position position="345"/>
    </location>
</feature>
<feature type="sequence conflict" description="In Ref. 1; AAG22045." evidence="25" ref="1">
    <original>F</original>
    <variation>L</variation>
    <location>
        <position position="343"/>
    </location>
</feature>
<sequence>MEDLLVEVRLDNGAYYKGQVTAVADDGIFVDVDGVPESMKYPFVNVRLPPEETVEVAAPIFEEGMEVEVFTRTNDRETCGWWVGIIKMRKAEIYAVAYIGFETSYTEICELGRLRAKNSNPPITAKTFYQFTLPVPEELREEAQKDGIHKEFQRTIDAGVCNYSRDLDALIVISKFEHTQKRASMLKDMHFRNLSQKVMLLKRTEEAARQLETTKLMSRGNYVEEFRVRDDLMGLAIGSHGSNIQAARTVDGVTNIELEEKSCTFKISGETEESVQRARAMLEYAEEFFQVPRELVGKVIGKNGRIIQEIVDKSGVFRIKVSAIAGDDEQDQNIPRELAHVPFVFIGTVESIANAKVLLEYHLSHLKEVEQLRQEKMEIDQQLRAIQESSMGSTQSFPVTRRSERGYSSDIESVRSMRGGGGGQRGRVRGRGGGGPGGGNGLNQRYHNNRRDEDDYNSRGDHQRDQQRGYNDRGGGDNTGSYRGGGGGAGGPGNNRRGGINRRPPRNDQQNGRDYQHHNHTTEEVRETREMSSVERADSNSSYEGSSRRRRRQKNNNGPSNTNGAVANNNNKPQSAQQPQQQQPPAPGNKAALNAGDASKQNSGNANAAGGASKPKDASRNGDKQQAGTQQQQPSQVQQQQAAQQQQPKPRRNKNRSNNHTDQPSGQQQLAENVKKEGLVNGTS</sequence>
<accession>Q9NFU0</accession>
<accession>A4V2M8</accession>
<accession>Q8INM7</accession>
<accession>Q8T0M0</accession>
<accession>Q8WQ60</accession>
<accession>Q95P21</accession>
<accession>Q9GSG3</accession>
<accession>Q9TVY4</accession>
<accession>Q9VH27</accession>
<proteinExistence type="evidence at protein level"/>
<gene>
    <name evidence="20 26" type="primary">Fmr1</name>
    <name evidence="30" type="synonym">FXR</name>
    <name type="ORF">CG6203</name>
</gene>
<comment type="function">
    <text evidence="6 7 8 10 11 12 13 15 16 17">Polyribosome-associated RNA-binding protein that plays a role in neuronal development and synaptic plasticity through the regulation of protein synthesis of mRNAs (PubMed:11046149, PubMed:11733059, PubMed:12368261, PubMed:17178403). Acts as an mRNA regulator by mediating formation of some phase-separated membraneless compartment: undergoes liquid-liquid phase separation upon binding to target mRNAs, leading to assemble mRNAs into cytoplasmic ribonucleoprotein granules that concentrate mRNAs with associated regulatory factors (PubMed:35165263). Mainly acts as an activator of mRNA translation: promotes translation of stored mRNAs in oocytes (PubMed:30115809). Can also act as a negative translational regulator of specific mRNAs (PubMed:11733059, PubMed:17178403). Represses translation of the microtubule-associated protein futsch mRNA to regulate microtubule-dependent synaptic growth and function (PubMed:11733059). Localizes to specific N6-methyladenosine (m6A)-containing RNAs as part of a complex with the m6A reader Ythdf and thereby regulates axonal growth in the mushroom bodies and neuromuscular junctions (PubMed:33428246). Specifically recognizes and binds a subset of N6-methyladenosine (m6A)-containing mRNAs in embryos, promoting formation of a phase-separated membraneless compartment that mediates degradation of maternal mRNAs (PubMed:35165263). May also be involved in microRNA (miRNA)-mediated translational suppression as part of the RNA-induced silencing complex (RISC) (PubMed:12368261, PubMed:14508492). Required for stability of the central pair of microtubules in the spermatid axoneme (PubMed:15183715). Regulates photoreceptor structure and neuromuscular junction (NMJ) neurotransmission in the eye (PubMed:11733059, PubMed:17178403). During embryogenesis, involved in germline fate determination (PubMed:16949822).</text>
</comment>
<comment type="subunit">
    <text evidence="6 8 9 10 12 13 16">Homodimer (PubMed:11046149). Interacts with AGO2, Dcr-1, Rm62, vig, RpL5 and RpL11; these interactions form the RNA-induced silencing complex (RISC), a messenger ribonucleoprotein particle (RNP) complex involved in translation regulation (PubMed:12368261, PubMed:14508492). As part of the RISC complex, interacts with Tudor-SN (PubMed:14508492). Component of a neuronal RNP at least composed of Fmr1, tral and me31B (PubMed:17178403). Interacts with piwi and vas; these interactions occur in the polar granules (PubMed:16949822). Interacts with Cyfip (PubMed:12818175). Associates with polyribosome (PubMed:12368261). Interacts with Ythdf; the interaction is RNA independent (PubMed:33428246).</text>
</comment>
<comment type="interaction">
    <interactant intactId="EBI-422631">
        <id>Q9NFU0</id>
    </interactant>
    <interactant intactId="EBI-442476">
        <id>Q9VUQ5</id>
        <label>AGO2</label>
    </interactant>
    <organismsDiffer>false</organismsDiffer>
    <experiments>4</experiments>
</comment>
<comment type="interaction">
    <interactant intactId="EBI-422631">
        <id>Q9NFU0</id>
    </interactant>
    <interactant intactId="EBI-422631">
        <id>Q9NFU0</id>
        <label>Fmr1</label>
    </interactant>
    <organismsDiffer>false</organismsDiffer>
    <experiments>2</experiments>
</comment>
<comment type="interaction">
    <interactant intactId="EBI-422631">
        <id>Q9NFU0</id>
    </interactant>
    <interactant intactId="EBI-200734">
        <id>P19109</id>
        <label>Rm62</label>
    </interactant>
    <organismsDiffer>false</organismsDiffer>
    <experiments>4</experiments>
</comment>
<comment type="interaction">
    <interactant intactId="EBI-422631">
        <id>Q9NFU0</id>
    </interactant>
    <interactant intactId="EBI-183104">
        <id>P46222</id>
        <label>RpL11</label>
    </interactant>
    <organismsDiffer>false</organismsDiffer>
    <experiments>5</experiments>
</comment>
<comment type="interaction">
    <interactant intactId="EBI-422631">
        <id>Q9NFU0</id>
    </interactant>
    <interactant intactId="EBI-605695">
        <id>Q9NIU2</id>
        <label>RpL5</label>
    </interactant>
    <organismsDiffer>false</organismsDiffer>
    <experiments>5</experiments>
</comment>
<comment type="subcellular location">
    <subcellularLocation>
        <location evidence="13">Cytoplasm</location>
        <location evidence="13">Cytoplasmic ribonucleoprotein granule</location>
    </subcellularLocation>
    <subcellularLocation>
        <location evidence="6 13">Cytoplasm</location>
    </subcellularLocation>
    <subcellularLocation>
        <location evidence="7">Perikaryon</location>
    </subcellularLocation>
    <subcellularLocation>
        <location evidence="7">Cell projection</location>
        <location evidence="7">Neuron projection</location>
    </subcellularLocation>
    <subcellularLocation>
        <location evidence="7">Synapse</location>
    </subcellularLocation>
    <subcellularLocation>
        <location evidence="1">Cytoplasm</location>
        <location evidence="1">Stress granule</location>
    </subcellularLocation>
    <text evidence="7">Localizes in the neuronal soma and cell processes, and in pre- and postsynaptic neurons, as well as in postsynaptic muscles.</text>
</comment>
<comment type="alternative products">
    <event type="alternative splicing"/>
    <isoform>
        <id>Q9NFU0-1</id>
        <name evidence="7">A</name>
        <sequence type="displayed"/>
    </isoform>
    <isoform>
        <id>Q9NFU0-4</id>
        <name evidence="18">B</name>
        <sequence type="described" ref="VSP_050785 VSP_050786 VSP_050787"/>
    </isoform>
    <isoform>
        <id>Q9NFU0-2</id>
        <name evidence="7">C</name>
        <name evidence="19">D</name>
        <sequence type="described" ref="VSP_050784"/>
    </isoform>
    <isoform>
        <id>Q9NFU0-3</id>
        <name evidence="19">E</name>
        <sequence type="described" ref="VSP_050783 VSP_050784"/>
    </isoform>
</comment>
<comment type="tissue specificity">
    <text evidence="11">Highly expressed in testes in the early stages of spermatogenesis before spermatid individualization (at protein level) (PubMed:15183715).</text>
</comment>
<comment type="developmental stage">
    <text evidence="6 7">Expressed during the embryonic development (PubMed:11046149). Expressed both maternally and zygotically in embryos (PubMed:11046149). Until early gastrulation, expression is uniformly distributed in the embryo (PubMed:11046149). At mid-gastrulation (stage 11), expressed everywhere with discernible concentration in the mesoderm (PubMed:11046149). After gastrulation (stage 14), expressed in the mesoderm, ventral nerve cord, and brain (PubMed:11046149). At stage 16, elevated expression is also seen in the muscle (PubMed:11046149). Highly expressed in nervous system throughout later development (at protein level) (PubMed:11046149, PubMed:11733059).</text>
</comment>
<comment type="domain">
    <text evidence="1">The C-terminal disordered region undergoes liquid-liquid phase separation (LLPS) for the formation of a membraneless compartment that concentrates mRNAs with associated regulatory factors.</text>
</comment>
<comment type="similarity">
    <text evidence="25">Belongs to the FMR1 family.</text>
</comment>
<name>FMR1_DROME</name>
<reference evidence="25 28" key="1">
    <citation type="journal article" date="2000" name="Mol. Cell. Biol.">
        <title>Characterization of dFMR1, a Drosophila melanogaster homolog of the fragile X mental retardation protein.</title>
        <authorList>
            <person name="Wan L."/>
            <person name="Dockendorff T.C."/>
            <person name="Jongens T.A."/>
            <person name="Dreyfuss G."/>
        </authorList>
    </citation>
    <scope>NUCLEOTIDE SEQUENCE [MRNA] (ISOFORM C)</scope>
    <scope>SUBUNIT</scope>
    <scope>RNA-BINDING</scope>
    <scope>SUBCELLULAR LOCATION</scope>
    <scope>TISSUE SPECIFICITY</scope>
    <scope>DEVELOPMENTAL STAGE</scope>
    <scope>MUTAGENESIS OF ILE-244 AND ILE-307</scope>
    <source>
        <tissue evidence="6">Ovary</tissue>
    </source>
</reference>
<reference evidence="25 30" key="2">
    <citation type="journal article" date="2001" name="Cell">
        <title>Drosophila fragile X-related gene regulates the MAP1B homolog Futsch to control synaptic structure and function.</title>
        <authorList>
            <person name="Zhang Y.Q."/>
            <person name="Bailey A.M."/>
            <person name="Matthies H.J.G."/>
            <person name="Renden R.B."/>
            <person name="Smith M.A."/>
            <person name="Speese S.D."/>
            <person name="Rubin G.M."/>
            <person name="Broadie K.S."/>
        </authorList>
    </citation>
    <scope>NUCLEOTIDE SEQUENCE [GENOMIC DNA / MRNA] (ISOFORMS A AND C)</scope>
    <scope>FUNCTION</scope>
    <scope>SUBCELLULAR LOCATION</scope>
    <scope>TISSUE SPECIFICITY</scope>
    <source>
        <strain evidence="7">Berkeley</strain>
        <tissue evidence="7">Embryo</tissue>
    </source>
</reference>
<reference evidence="25 32" key="3">
    <citation type="submission" date="2001-12" db="EMBL/GenBank/DDBJ databases">
        <title>Modeling human fragile X syndrome in flies.</title>
        <authorList>
            <person name="Zhang Y.Q."/>
            <person name="Broadie K.S."/>
        </authorList>
    </citation>
    <scope>NUCLEOTIDE SEQUENCE [MRNA] (ISOFORMS B AND C)</scope>
    <source>
        <strain evidence="18">Berkeley</strain>
        <tissue evidence="18">Embryo</tissue>
        <tissue evidence="18">Ovary</tissue>
        <tissue evidence="31">Testis</tissue>
    </source>
</reference>
<reference evidence="27" key="4">
    <citation type="journal article" date="2000" name="Science">
        <title>The genome sequence of Drosophila melanogaster.</title>
        <authorList>
            <person name="Adams M.D."/>
            <person name="Celniker S.E."/>
            <person name="Holt R.A."/>
            <person name="Evans C.A."/>
            <person name="Gocayne J.D."/>
            <person name="Amanatides P.G."/>
            <person name="Scherer S.E."/>
            <person name="Li P.W."/>
            <person name="Hoskins R.A."/>
            <person name="Galle R.F."/>
            <person name="George R.A."/>
            <person name="Lewis S.E."/>
            <person name="Richards S."/>
            <person name="Ashburner M."/>
            <person name="Henderson S.N."/>
            <person name="Sutton G.G."/>
            <person name="Wortman J.R."/>
            <person name="Yandell M.D."/>
            <person name="Zhang Q."/>
            <person name="Chen L.X."/>
            <person name="Brandon R.C."/>
            <person name="Rogers Y.-H.C."/>
            <person name="Blazej R.G."/>
            <person name="Champe M."/>
            <person name="Pfeiffer B.D."/>
            <person name="Wan K.H."/>
            <person name="Doyle C."/>
            <person name="Baxter E.G."/>
            <person name="Helt G."/>
            <person name="Nelson C.R."/>
            <person name="Miklos G.L.G."/>
            <person name="Abril J.F."/>
            <person name="Agbayani A."/>
            <person name="An H.-J."/>
            <person name="Andrews-Pfannkoch C."/>
            <person name="Baldwin D."/>
            <person name="Ballew R.M."/>
            <person name="Basu A."/>
            <person name="Baxendale J."/>
            <person name="Bayraktaroglu L."/>
            <person name="Beasley E.M."/>
            <person name="Beeson K.Y."/>
            <person name="Benos P.V."/>
            <person name="Berman B.P."/>
            <person name="Bhandari D."/>
            <person name="Bolshakov S."/>
            <person name="Borkova D."/>
            <person name="Botchan M.R."/>
            <person name="Bouck J."/>
            <person name="Brokstein P."/>
            <person name="Brottier P."/>
            <person name="Burtis K.C."/>
            <person name="Busam D.A."/>
            <person name="Butler H."/>
            <person name="Cadieu E."/>
            <person name="Center A."/>
            <person name="Chandra I."/>
            <person name="Cherry J.M."/>
            <person name="Cawley S."/>
            <person name="Dahlke C."/>
            <person name="Davenport L.B."/>
            <person name="Davies P."/>
            <person name="de Pablos B."/>
            <person name="Delcher A."/>
            <person name="Deng Z."/>
            <person name="Mays A.D."/>
            <person name="Dew I."/>
            <person name="Dietz S.M."/>
            <person name="Dodson K."/>
            <person name="Doup L.E."/>
            <person name="Downes M."/>
            <person name="Dugan-Rocha S."/>
            <person name="Dunkov B.C."/>
            <person name="Dunn P."/>
            <person name="Durbin K.J."/>
            <person name="Evangelista C.C."/>
            <person name="Ferraz C."/>
            <person name="Ferriera S."/>
            <person name="Fleischmann W."/>
            <person name="Fosler C."/>
            <person name="Gabrielian A.E."/>
            <person name="Garg N.S."/>
            <person name="Gelbart W.M."/>
            <person name="Glasser K."/>
            <person name="Glodek A."/>
            <person name="Gong F."/>
            <person name="Gorrell J.H."/>
            <person name="Gu Z."/>
            <person name="Guan P."/>
            <person name="Harris M."/>
            <person name="Harris N.L."/>
            <person name="Harvey D.A."/>
            <person name="Heiman T.J."/>
            <person name="Hernandez J.R."/>
            <person name="Houck J."/>
            <person name="Hostin D."/>
            <person name="Houston K.A."/>
            <person name="Howland T.J."/>
            <person name="Wei M.-H."/>
            <person name="Ibegwam C."/>
            <person name="Jalali M."/>
            <person name="Kalush F."/>
            <person name="Karpen G.H."/>
            <person name="Ke Z."/>
            <person name="Kennison J.A."/>
            <person name="Ketchum K.A."/>
            <person name="Kimmel B.E."/>
            <person name="Kodira C.D."/>
            <person name="Kraft C.L."/>
            <person name="Kravitz S."/>
            <person name="Kulp D."/>
            <person name="Lai Z."/>
            <person name="Lasko P."/>
            <person name="Lei Y."/>
            <person name="Levitsky A.A."/>
            <person name="Li J.H."/>
            <person name="Li Z."/>
            <person name="Liang Y."/>
            <person name="Lin X."/>
            <person name="Liu X."/>
            <person name="Mattei B."/>
            <person name="McIntosh T.C."/>
            <person name="McLeod M.P."/>
            <person name="McPherson D."/>
            <person name="Merkulov G."/>
            <person name="Milshina N.V."/>
            <person name="Mobarry C."/>
            <person name="Morris J."/>
            <person name="Moshrefi A."/>
            <person name="Mount S.M."/>
            <person name="Moy M."/>
            <person name="Murphy B."/>
            <person name="Murphy L."/>
            <person name="Muzny D.M."/>
            <person name="Nelson D.L."/>
            <person name="Nelson D.R."/>
            <person name="Nelson K.A."/>
            <person name="Nixon K."/>
            <person name="Nusskern D.R."/>
            <person name="Pacleb J.M."/>
            <person name="Palazzolo M."/>
            <person name="Pittman G.S."/>
            <person name="Pan S."/>
            <person name="Pollard J."/>
            <person name="Puri V."/>
            <person name="Reese M.G."/>
            <person name="Reinert K."/>
            <person name="Remington K."/>
            <person name="Saunders R.D.C."/>
            <person name="Scheeler F."/>
            <person name="Shen H."/>
            <person name="Shue B.C."/>
            <person name="Siden-Kiamos I."/>
            <person name="Simpson M."/>
            <person name="Skupski M.P."/>
            <person name="Smith T.J."/>
            <person name="Spier E."/>
            <person name="Spradling A.C."/>
            <person name="Stapleton M."/>
            <person name="Strong R."/>
            <person name="Sun E."/>
            <person name="Svirskas R."/>
            <person name="Tector C."/>
            <person name="Turner R."/>
            <person name="Venter E."/>
            <person name="Wang A.H."/>
            <person name="Wang X."/>
            <person name="Wang Z.-Y."/>
            <person name="Wassarman D.A."/>
            <person name="Weinstock G.M."/>
            <person name="Weissenbach J."/>
            <person name="Williams S.M."/>
            <person name="Woodage T."/>
            <person name="Worley K.C."/>
            <person name="Wu D."/>
            <person name="Yang S."/>
            <person name="Yao Q.A."/>
            <person name="Ye J."/>
            <person name="Yeh R.-F."/>
            <person name="Zaveri J.S."/>
            <person name="Zhan M."/>
            <person name="Zhang G."/>
            <person name="Zhao Q."/>
            <person name="Zheng L."/>
            <person name="Zheng X.H."/>
            <person name="Zhong F.N."/>
            <person name="Zhong W."/>
            <person name="Zhou X."/>
            <person name="Zhu S.C."/>
            <person name="Zhu X."/>
            <person name="Smith H.O."/>
            <person name="Gibbs R.A."/>
            <person name="Myers E.W."/>
            <person name="Rubin G.M."/>
            <person name="Venter J.C."/>
        </authorList>
    </citation>
    <scope>NUCLEOTIDE SEQUENCE [LARGE SCALE GENOMIC DNA]</scope>
    <source>
        <strain evidence="5">Berkeley</strain>
    </source>
</reference>
<reference evidence="25 27" key="5">
    <citation type="journal article" date="2002" name="Genome Biol.">
        <title>Annotation of the Drosophila melanogaster euchromatic genome: a systematic review.</title>
        <authorList>
            <person name="Misra S."/>
            <person name="Crosby M.A."/>
            <person name="Mungall C.J."/>
            <person name="Matthews B.B."/>
            <person name="Campbell K.S."/>
            <person name="Hradecky P."/>
            <person name="Huang Y."/>
            <person name="Kaminker J.S."/>
            <person name="Millburn G.H."/>
            <person name="Prochnik S.E."/>
            <person name="Smith C.D."/>
            <person name="Tupy J.L."/>
            <person name="Whitfield E.J."/>
            <person name="Bayraktaroglu L."/>
            <person name="Berman B.P."/>
            <person name="Bettencourt B.R."/>
            <person name="Celniker S.E."/>
            <person name="de Grey A.D.N.J."/>
            <person name="Drysdale R.A."/>
            <person name="Harris N.L."/>
            <person name="Richter J."/>
            <person name="Russo S."/>
            <person name="Schroeder A.J."/>
            <person name="Shu S.Q."/>
            <person name="Stapleton M."/>
            <person name="Yamada C."/>
            <person name="Ashburner M."/>
            <person name="Gelbart W.M."/>
            <person name="Rubin G.M."/>
            <person name="Lewis S.E."/>
        </authorList>
    </citation>
    <scope>GENOME REANNOTATION</scope>
    <scope>ALTERNATIVE SPLICING</scope>
    <source>
        <strain>Berkeley</strain>
    </source>
</reference>
<reference evidence="25 32" key="6">
    <citation type="submission" date="2007-11" db="EMBL/GenBank/DDBJ databases">
        <authorList>
            <person name="Stapleton M."/>
            <person name="Brokstein P."/>
            <person name="Hong L."/>
            <person name="Agbayani A."/>
            <person name="Carlson J.W."/>
            <person name="Champe M."/>
            <person name="Chavez C."/>
            <person name="Dorsett V."/>
            <person name="Dresnek D."/>
            <person name="Farfan D."/>
            <person name="Frise E."/>
            <person name="George R.A."/>
            <person name="Gonzalez M."/>
            <person name="Guarin H."/>
            <person name="Kapadia B."/>
            <person name="Kronmiller B."/>
            <person name="Li P.W."/>
            <person name="Liao G."/>
            <person name="Miranda A."/>
            <person name="Mungall C.J."/>
            <person name="Nunoo J."/>
            <person name="Pacleb J.M."/>
            <person name="Paragas V."/>
            <person name="Park S."/>
            <person name="Patel S."/>
            <person name="Phouanenavong S."/>
            <person name="Wan K.H."/>
            <person name="Yu C."/>
            <person name="Lewis S.E."/>
            <person name="Rubin G.M."/>
            <person name="Celniker S.E."/>
        </authorList>
    </citation>
    <scope>NUCLEOTIDE SEQUENCE [LARGE SCALE MRNA] (ISOFORM C)</scope>
    <scope>NUCLEOTIDE SEQUENCE [LARGE SCALE MRNA] OF 105-684 (ISOFORMS C/E)</scope>
    <source>
        <strain evidence="29">Berkeley</strain>
        <tissue>Embryo</tissue>
        <tissue>Head</tissue>
    </source>
</reference>
<reference evidence="25" key="7">
    <citation type="journal article" date="2002" name="Genes Dev.">
        <title>A Drosophila fragile X protein interacts with components of RNAi and ribosomal proteins.</title>
        <authorList>
            <person name="Ishizuka A."/>
            <person name="Siomi M.C."/>
            <person name="Siomi H."/>
        </authorList>
    </citation>
    <scope>FUNCTION</scope>
    <scope>INTERACTION WITH AGO2; DCR-1; RM62; RPL5 AND RPL11</scope>
    <scope>ASSOCIATION WITH POLYRIBOSOME</scope>
</reference>
<reference key="8">
    <citation type="journal article" date="2003" name="Nature">
        <title>A micrococcal nuclease homologue in RNAi effector complexes.</title>
        <authorList>
            <person name="Caudy A.A."/>
            <person name="Ketting R.F."/>
            <person name="Hammond S.M."/>
            <person name="Denli A.M."/>
            <person name="Bathoorn A.M."/>
            <person name="Tops B.B."/>
            <person name="Silva J.M."/>
            <person name="Myers M.M."/>
            <person name="Hannon G.J."/>
            <person name="Plasterk R.H."/>
        </authorList>
    </citation>
    <scope>FUNCTION</scope>
    <scope>INTERACTION WITH VIG; AGO2 AND TUDOR-SN</scope>
</reference>
<reference key="9">
    <citation type="journal article" date="2003" name="Neuron">
        <title>CYFIP/Sra-1 controls neuronal connectivity in Drosophila and links the Rac1 GTPase pathway to the fragile X protein.</title>
        <authorList>
            <person name="Schenck A."/>
            <person name="Bardoni B."/>
            <person name="Langmann C."/>
            <person name="Harden N."/>
            <person name="Mandel J.-L."/>
            <person name="Giangrande A."/>
        </authorList>
    </citation>
    <scope>INTERACTION WITH CYFIP</scope>
</reference>
<reference evidence="25" key="10">
    <citation type="journal article" date="2004" name="Dev. Biol.">
        <title>The Drosophila fragile X-related gene regulates axoneme differentiation during spermatogenesis.</title>
        <authorList>
            <person name="Zhang Y.Q."/>
            <person name="Matthies H.J.G."/>
            <person name="Mancuso J."/>
            <person name="Andrews H.K."/>
            <person name="Woodruff E. III"/>
            <person name="Friedman D."/>
            <person name="Broadie K.S."/>
        </authorList>
    </citation>
    <scope>FUNCTION</scope>
    <scope>TISSUE SPECIFICITY</scope>
</reference>
<reference key="11">
    <citation type="journal article" date="2006" name="Curr. Biol.">
        <title>The role of PIWI and the miRNA machinery in Drosophila germline determination.</title>
        <authorList>
            <person name="Megosh H.B."/>
            <person name="Cox D.N."/>
            <person name="Campbell C."/>
            <person name="Lin H."/>
        </authorList>
    </citation>
    <scope>FUNCTION</scope>
    <scope>INTERACTION WITH PIWI AND VAS</scope>
</reference>
<reference key="12">
    <citation type="journal article" date="2008" name="J. Proteome Res.">
        <title>Phosphoproteome analysis of Drosophila melanogaster embryos.</title>
        <authorList>
            <person name="Zhai B."/>
            <person name="Villen J."/>
            <person name="Beausoleil S.A."/>
            <person name="Mintseris J."/>
            <person name="Gygi S.P."/>
        </authorList>
    </citation>
    <scope>PHOSPHORYLATION [LARGE SCALE ANALYSIS] AT SER-403; SER-408; SER-409; SER-413; SER-532; SER-533; SER-539 AND SER-541</scope>
    <scope>IDENTIFICATION BY MASS SPECTROMETRY</scope>
    <source>
        <tissue>Embryo</tissue>
    </source>
</reference>
<reference key="13">
    <citation type="journal article" date="2006" name="Neuron">
        <title>Staufen- and FMRP-containing neuronal RNPs are structurally and functionally related to somatic P bodies.</title>
        <authorList>
            <person name="Barbee S.A."/>
            <person name="Estes P.S."/>
            <person name="Cziko A.M."/>
            <person name="Hillebrand J."/>
            <person name="Luedeman R.A."/>
            <person name="Coller J.M."/>
            <person name="Johnson N."/>
            <person name="Howlett I.C."/>
            <person name="Geng C."/>
            <person name="Ueda R."/>
            <person name="Brand A.H."/>
            <person name="Newbury S.F."/>
            <person name="Wilhelm J.E."/>
            <person name="Levine R.B."/>
            <person name="Nakamura A."/>
            <person name="Parker R."/>
            <person name="Ramaswami M."/>
        </authorList>
    </citation>
    <scope>FUNCTION</scope>
    <scope>IDENTIFICATION IN A COMPLEX WITH TRAL AND ME31B</scope>
    <scope>SUBCELLULAR LOCATION</scope>
</reference>
<reference key="14">
    <citation type="journal article" date="2018" name="Science">
        <title>Fragile X mental retardation 1 gene enhances the translation of large autism-related proteins.</title>
        <authorList>
            <person name="Greenblatt E.J."/>
            <person name="Spradling A.C."/>
        </authorList>
    </citation>
    <scope>FUNCTION</scope>
</reference>
<reference key="15">
    <citation type="journal article" date="2021" name="EMBO J.">
        <title>Ythdf is a N6-methyladenosine reader that modulates Fmr1 target mRNA selection and restricts axonal growth in Drosophila.</title>
        <authorList>
            <person name="Worpenberg L."/>
            <person name="Paolantoni C."/>
            <person name="Longhi S."/>
            <person name="Mulorz M.M."/>
            <person name="Lence T."/>
            <person name="Wessels H.H."/>
            <person name="Dassi E."/>
            <person name="Aiello G."/>
            <person name="Sutandy F.X.R."/>
            <person name="Scheibe M."/>
            <person name="Edupuganti R.R."/>
            <person name="Busch A."/>
            <person name="Moeckel M.M."/>
            <person name="Vermeulen M."/>
            <person name="Butter F."/>
            <person name="Koenig J."/>
            <person name="Notarangelo M."/>
            <person name="Ohler U."/>
            <person name="Dieterich C."/>
            <person name="Quattrone A."/>
            <person name="Soldano A."/>
            <person name="Roignant J.Y."/>
        </authorList>
    </citation>
    <scope>IDENTIFICATION BY MASS SPECTROMETRY</scope>
    <scope>FUNCTION</scope>
    <scope>INTERACTION WITH YTHDF</scope>
</reference>
<reference key="16">
    <citation type="journal article" date="2022" name="Nat. Commun.">
        <title>Dynamic FMR1 granule phase switch instructed by m6A modification contributes to maternal RNA decay.</title>
        <authorList>
            <person name="Zhang G."/>
            <person name="Xu Y."/>
            <person name="Wang X."/>
            <person name="Zhu Y."/>
            <person name="Wang L."/>
            <person name="Zhang W."/>
            <person name="Wang Y."/>
            <person name="Gao Y."/>
            <person name="Wu X."/>
            <person name="Cheng Y."/>
            <person name="Sun Q."/>
            <person name="Chen D."/>
        </authorList>
    </citation>
    <scope>FUNCTION</scope>
    <scope>MUTAGENESIS OF VAL-291; VAL-299; 302-LYS-ASN-303; ILE-307; VAL-311; PHE-343 AND PHE-345</scope>
</reference>
<protein>
    <recommendedName>
        <fullName evidence="1">Fragile X messenger ribonucleoprotein 1 homolog</fullName>
        <shortName evidence="22">FMRP</shortName>
        <shortName evidence="20">dFMR1</shortName>
    </recommendedName>
</protein>
<dbReference type="EMBL" id="AF305881">
    <property type="protein sequence ID" value="AAG22045.1"/>
    <property type="molecule type" value="mRNA"/>
</dbReference>
<dbReference type="EMBL" id="AF205596">
    <property type="protein sequence ID" value="AAF14639.1"/>
    <property type="molecule type" value="mRNA"/>
</dbReference>
<dbReference type="EMBL" id="AF205597">
    <property type="protein sequence ID" value="AAF14640.1"/>
    <property type="molecule type" value="Genomic_DNA"/>
</dbReference>
<dbReference type="EMBL" id="AJ271221">
    <property type="protein sequence ID" value="CAB66340.1"/>
    <property type="molecule type" value="mRNA"/>
</dbReference>
<dbReference type="EMBL" id="AJ413217">
    <property type="protein sequence ID" value="CAC88757.2"/>
    <property type="molecule type" value="mRNA"/>
</dbReference>
<dbReference type="EMBL" id="AJ422082">
    <property type="protein sequence ID" value="CAD19443.1"/>
    <property type="molecule type" value="mRNA"/>
</dbReference>
<dbReference type="EMBL" id="AJ422083">
    <property type="protein sequence ID" value="CAD19444.1"/>
    <property type="molecule type" value="mRNA"/>
</dbReference>
<dbReference type="EMBL" id="AE014297">
    <property type="protein sequence ID" value="AAF54493.2"/>
    <property type="molecule type" value="Genomic_DNA"/>
</dbReference>
<dbReference type="EMBL" id="AE014297">
    <property type="protein sequence ID" value="AAN13451.1"/>
    <property type="molecule type" value="Genomic_DNA"/>
</dbReference>
<dbReference type="EMBL" id="AE014297">
    <property type="protein sequence ID" value="AAN13452.1"/>
    <property type="molecule type" value="Genomic_DNA"/>
</dbReference>
<dbReference type="EMBL" id="AE014297">
    <property type="protein sequence ID" value="AAN13453.1"/>
    <property type="molecule type" value="Genomic_DNA"/>
</dbReference>
<dbReference type="EMBL" id="AE014297">
    <property type="protein sequence ID" value="AAN13454.1"/>
    <property type="molecule type" value="Genomic_DNA"/>
</dbReference>
<dbReference type="EMBL" id="AY069182">
    <property type="protein sequence ID" value="AAL39327.2"/>
    <property type="molecule type" value="mRNA"/>
</dbReference>
<dbReference type="EMBL" id="BT031124">
    <property type="protein sequence ID" value="ABX00746.1"/>
    <property type="molecule type" value="mRNA"/>
</dbReference>
<dbReference type="RefSeq" id="NP_001303443.1">
    <molecule id="Q9NFU0-2"/>
    <property type="nucleotide sequence ID" value="NM_001316514.1"/>
</dbReference>
<dbReference type="RefSeq" id="NP_001303444.1">
    <molecule id="Q9NFU0-2"/>
    <property type="nucleotide sequence ID" value="NM_001316515.1"/>
</dbReference>
<dbReference type="RefSeq" id="NP_611645.1">
    <molecule id="Q9NFU0-1"/>
    <property type="nucleotide sequence ID" value="NM_137801.4"/>
</dbReference>
<dbReference type="RefSeq" id="NP_731443.1">
    <molecule id="Q9NFU0-2"/>
    <property type="nucleotide sequence ID" value="NM_169324.2"/>
</dbReference>
<dbReference type="RefSeq" id="NP_731444.1">
    <molecule id="Q9NFU0-2"/>
    <property type="nucleotide sequence ID" value="NM_169325.3"/>
</dbReference>
<dbReference type="RefSeq" id="NP_731445.1">
    <molecule id="Q9NFU0-3"/>
    <property type="nucleotide sequence ID" value="NM_169326.3"/>
</dbReference>
<dbReference type="RefSeq" id="NP_731446.1">
    <molecule id="Q9NFU0-4"/>
    <property type="nucleotide sequence ID" value="NM_169327.2"/>
</dbReference>
<dbReference type="SMR" id="Q9NFU0"/>
<dbReference type="BioGRID" id="63147">
    <property type="interactions" value="125"/>
</dbReference>
<dbReference type="FunCoup" id="Q9NFU0">
    <property type="interactions" value="687"/>
</dbReference>
<dbReference type="IntAct" id="Q9NFU0">
    <property type="interactions" value="23"/>
</dbReference>
<dbReference type="MINT" id="Q9NFU0"/>
<dbReference type="STRING" id="7227.FBpp0300445"/>
<dbReference type="iPTMnet" id="Q9NFU0"/>
<dbReference type="PaxDb" id="7227-FBpp0300445"/>
<dbReference type="DNASU" id="37528"/>
<dbReference type="EnsemblMetazoa" id="FBtr0082196">
    <molecule id="Q9NFU0-4"/>
    <property type="protein sequence ID" value="FBpp0081674"/>
    <property type="gene ID" value="FBgn0028734"/>
</dbReference>
<dbReference type="EnsemblMetazoa" id="FBtr0082197">
    <molecule id="Q9NFU0-1"/>
    <property type="protein sequence ID" value="FBpp0081675"/>
    <property type="gene ID" value="FBgn0028734"/>
</dbReference>
<dbReference type="EnsemblMetazoa" id="FBtr0082198">
    <molecule id="Q9NFU0-2"/>
    <property type="protein sequence ID" value="FBpp0081676"/>
    <property type="gene ID" value="FBgn0028734"/>
</dbReference>
<dbReference type="EnsemblMetazoa" id="FBtr0082199">
    <molecule id="Q9NFU0-2"/>
    <property type="protein sequence ID" value="FBpp0081677"/>
    <property type="gene ID" value="FBgn0028734"/>
</dbReference>
<dbReference type="EnsemblMetazoa" id="FBtr0082200">
    <molecule id="Q9NFU0-3"/>
    <property type="protein sequence ID" value="FBpp0081678"/>
    <property type="gene ID" value="FBgn0028734"/>
</dbReference>
<dbReference type="EnsemblMetazoa" id="FBtr0347104">
    <molecule id="Q9NFU0-2"/>
    <property type="protein sequence ID" value="FBpp0312465"/>
    <property type="gene ID" value="FBgn0028734"/>
</dbReference>
<dbReference type="EnsemblMetazoa" id="FBtr0347105">
    <molecule id="Q9NFU0-2"/>
    <property type="protein sequence ID" value="FBpp0312466"/>
    <property type="gene ID" value="FBgn0028734"/>
</dbReference>
<dbReference type="GeneID" id="37528"/>
<dbReference type="KEGG" id="dme:Dmel_CG6203"/>
<dbReference type="UCSC" id="CG6203-RD">
    <property type="organism name" value="d. melanogaster"/>
</dbReference>
<dbReference type="AGR" id="FB:FBgn0028734"/>
<dbReference type="CTD" id="2332"/>
<dbReference type="FlyBase" id="FBgn0028734">
    <property type="gene designation" value="Fmr1"/>
</dbReference>
<dbReference type="VEuPathDB" id="VectorBase:FBgn0028734"/>
<dbReference type="eggNOG" id="ENOG502QPKJ">
    <property type="taxonomic scope" value="Eukaryota"/>
</dbReference>
<dbReference type="GeneTree" id="ENSGT00950000183189"/>
<dbReference type="InParanoid" id="Q9NFU0"/>
<dbReference type="OrthoDB" id="424249at2759"/>
<dbReference type="PhylomeDB" id="Q9NFU0"/>
<dbReference type="SignaLink" id="Q9NFU0"/>
<dbReference type="BioGRID-ORCS" id="37528">
    <property type="hits" value="0 hits in 3 CRISPR screens"/>
</dbReference>
<dbReference type="ChiTaRS" id="Fmr1">
    <property type="organism name" value="fly"/>
</dbReference>
<dbReference type="GenomeRNAi" id="37528"/>
<dbReference type="PRO" id="PR:Q9NFU0"/>
<dbReference type="Proteomes" id="UP000000803">
    <property type="component" value="Chromosome 3R"/>
</dbReference>
<dbReference type="Bgee" id="FBgn0028734">
    <property type="expression patterns" value="Expressed in spermatocyte in testis and 258 other cell types or tissues"/>
</dbReference>
<dbReference type="ExpressionAtlas" id="Q9NFU0">
    <property type="expression patterns" value="baseline and differential"/>
</dbReference>
<dbReference type="GO" id="GO:0005737">
    <property type="term" value="C:cytoplasm"/>
    <property type="evidence" value="ECO:0000314"/>
    <property type="project" value="FlyBase"/>
</dbReference>
<dbReference type="GO" id="GO:0010494">
    <property type="term" value="C:cytoplasmic stress granule"/>
    <property type="evidence" value="ECO:0000314"/>
    <property type="project" value="FlyBase"/>
</dbReference>
<dbReference type="GO" id="GO:0000139">
    <property type="term" value="C:Golgi membrane"/>
    <property type="evidence" value="ECO:0000314"/>
    <property type="project" value="FlyBase"/>
</dbReference>
<dbReference type="GO" id="GO:0043005">
    <property type="term" value="C:neuron projection"/>
    <property type="evidence" value="ECO:0000318"/>
    <property type="project" value="GO_Central"/>
</dbReference>
<dbReference type="GO" id="GO:0120111">
    <property type="term" value="C:neuron projection cytoplasm"/>
    <property type="evidence" value="ECO:0000314"/>
    <property type="project" value="FlyBase"/>
</dbReference>
<dbReference type="GO" id="GO:0043025">
    <property type="term" value="C:neuronal cell body"/>
    <property type="evidence" value="ECO:0000314"/>
    <property type="project" value="FlyBase"/>
</dbReference>
<dbReference type="GO" id="GO:0071598">
    <property type="term" value="C:neuronal ribonucleoprotein granule"/>
    <property type="evidence" value="ECO:0000314"/>
    <property type="project" value="UniProtKB"/>
</dbReference>
<dbReference type="GO" id="GO:0005634">
    <property type="term" value="C:nucleus"/>
    <property type="evidence" value="ECO:0000318"/>
    <property type="project" value="GO_Central"/>
</dbReference>
<dbReference type="GO" id="GO:0043186">
    <property type="term" value="C:P granule"/>
    <property type="evidence" value="ECO:0000314"/>
    <property type="project" value="FlyBase"/>
</dbReference>
<dbReference type="GO" id="GO:0043204">
    <property type="term" value="C:perikaryon"/>
    <property type="evidence" value="ECO:0007669"/>
    <property type="project" value="UniProtKB-SubCell"/>
</dbReference>
<dbReference type="GO" id="GO:0098793">
    <property type="term" value="C:presynapse"/>
    <property type="evidence" value="ECO:0007669"/>
    <property type="project" value="GOC"/>
</dbReference>
<dbReference type="GO" id="GO:0016442">
    <property type="term" value="C:RISC complex"/>
    <property type="evidence" value="ECO:0000314"/>
    <property type="project" value="UniProtKB"/>
</dbReference>
<dbReference type="GO" id="GO:0017151">
    <property type="term" value="F:DEAD/H-box RNA helicase binding"/>
    <property type="evidence" value="ECO:0000353"/>
    <property type="project" value="UniProtKB"/>
</dbReference>
<dbReference type="GO" id="GO:0042802">
    <property type="term" value="F:identical protein binding"/>
    <property type="evidence" value="ECO:0000353"/>
    <property type="project" value="IntAct"/>
</dbReference>
<dbReference type="GO" id="GO:0140693">
    <property type="term" value="F:molecular condensate scaffold activity"/>
    <property type="evidence" value="ECO:0000314"/>
    <property type="project" value="UniProtKB"/>
</dbReference>
<dbReference type="GO" id="GO:0003730">
    <property type="term" value="F:mRNA 3'-UTR binding"/>
    <property type="evidence" value="ECO:0000318"/>
    <property type="project" value="GO_Central"/>
</dbReference>
<dbReference type="GO" id="GO:0003729">
    <property type="term" value="F:mRNA binding"/>
    <property type="evidence" value="ECO:0000314"/>
    <property type="project" value="UniProtKB"/>
</dbReference>
<dbReference type="GO" id="GO:0000900">
    <property type="term" value="F:mRNA regulatory element binding translation repressor activity"/>
    <property type="evidence" value="ECO:0000314"/>
    <property type="project" value="FlyBase"/>
</dbReference>
<dbReference type="GO" id="GO:1990247">
    <property type="term" value="F:N6-methyladenosine-containing RNA reader activity"/>
    <property type="evidence" value="ECO:0000314"/>
    <property type="project" value="UniProtKB"/>
</dbReference>
<dbReference type="GO" id="GO:0003723">
    <property type="term" value="F:RNA binding"/>
    <property type="evidence" value="ECO:0000314"/>
    <property type="project" value="FlyBase"/>
</dbReference>
<dbReference type="GO" id="GO:0045182">
    <property type="term" value="F:translation regulator activity"/>
    <property type="evidence" value="ECO:0000315"/>
    <property type="project" value="CACAO"/>
</dbReference>
<dbReference type="GO" id="GO:0008344">
    <property type="term" value="P:adult locomotory behavior"/>
    <property type="evidence" value="ECO:0000315"/>
    <property type="project" value="FlyBase"/>
</dbReference>
<dbReference type="GO" id="GO:0048513">
    <property type="term" value="P:animal organ development"/>
    <property type="evidence" value="ECO:0000318"/>
    <property type="project" value="GO_Central"/>
</dbReference>
<dbReference type="GO" id="GO:0008306">
    <property type="term" value="P:associative learning"/>
    <property type="evidence" value="ECO:0000315"/>
    <property type="project" value="FlyBase"/>
</dbReference>
<dbReference type="GO" id="GO:0007411">
    <property type="term" value="P:axon guidance"/>
    <property type="evidence" value="ECO:0000315"/>
    <property type="project" value="FlyBase"/>
</dbReference>
<dbReference type="GO" id="GO:0007413">
    <property type="term" value="P:axonal fasciculation"/>
    <property type="evidence" value="ECO:0000315"/>
    <property type="project" value="FlyBase"/>
</dbReference>
<dbReference type="GO" id="GO:0007409">
    <property type="term" value="P:axonogenesis"/>
    <property type="evidence" value="ECO:0000315"/>
    <property type="project" value="FlyBase"/>
</dbReference>
<dbReference type="GO" id="GO:0007420">
    <property type="term" value="P:brain development"/>
    <property type="evidence" value="ECO:0000315"/>
    <property type="project" value="FlyBase"/>
</dbReference>
<dbReference type="GO" id="GO:0007349">
    <property type="term" value="P:cellularization"/>
    <property type="evidence" value="ECO:0000314"/>
    <property type="project" value="FlyBase"/>
</dbReference>
<dbReference type="GO" id="GO:0007623">
    <property type="term" value="P:circadian rhythm"/>
    <property type="evidence" value="ECO:0000315"/>
    <property type="project" value="FlyBase"/>
</dbReference>
<dbReference type="GO" id="GO:0050802">
    <property type="term" value="P:circadian sleep/wake cycle, sleep"/>
    <property type="evidence" value="ECO:0000315"/>
    <property type="project" value="FlyBase"/>
</dbReference>
<dbReference type="GO" id="GO:0050976">
    <property type="term" value="P:detection of mechanical stimulus involved in sensory perception of touch"/>
    <property type="evidence" value="ECO:0000315"/>
    <property type="project" value="FlyBase"/>
</dbReference>
<dbReference type="GO" id="GO:0007281">
    <property type="term" value="P:germ cell development"/>
    <property type="evidence" value="ECO:0000315"/>
    <property type="project" value="FlyBase"/>
</dbReference>
<dbReference type="GO" id="GO:0048134">
    <property type="term" value="P:germ-line cyst formation"/>
    <property type="evidence" value="ECO:0000315"/>
    <property type="project" value="FlyBase"/>
</dbReference>
<dbReference type="GO" id="GO:0007294">
    <property type="term" value="P:germarium-derived oocyte fate determination"/>
    <property type="evidence" value="ECO:0000315"/>
    <property type="project" value="FlyBase"/>
</dbReference>
<dbReference type="GO" id="GO:0007625">
    <property type="term" value="P:grooming behavior"/>
    <property type="evidence" value="ECO:0000315"/>
    <property type="project" value="FlyBase"/>
</dbReference>
<dbReference type="GO" id="GO:0046959">
    <property type="term" value="P:habituation"/>
    <property type="evidence" value="ECO:0000315"/>
    <property type="project" value="FlyBase"/>
</dbReference>
<dbReference type="GO" id="GO:0031507">
    <property type="term" value="P:heterochromatin formation"/>
    <property type="evidence" value="ECO:0000315"/>
    <property type="project" value="FlyBase"/>
</dbReference>
<dbReference type="GO" id="GO:0008345">
    <property type="term" value="P:larval locomotory behavior"/>
    <property type="evidence" value="ECO:0000315"/>
    <property type="project" value="FlyBase"/>
</dbReference>
<dbReference type="GO" id="GO:0045475">
    <property type="term" value="P:locomotor rhythm"/>
    <property type="evidence" value="ECO:0000315"/>
    <property type="project" value="FlyBase"/>
</dbReference>
<dbReference type="GO" id="GO:0007616">
    <property type="term" value="P:long-term memory"/>
    <property type="evidence" value="ECO:0000315"/>
    <property type="project" value="FlyBase"/>
</dbReference>
<dbReference type="GO" id="GO:0008049">
    <property type="term" value="P:male courtship behavior"/>
    <property type="evidence" value="ECO:0000315"/>
    <property type="project" value="FlyBase"/>
</dbReference>
<dbReference type="GO" id="GO:0072375">
    <property type="term" value="P:medium-term memory"/>
    <property type="evidence" value="ECO:0000315"/>
    <property type="project" value="FlyBase"/>
</dbReference>
<dbReference type="GO" id="GO:0140694">
    <property type="term" value="P:membraneless organelle assembly"/>
    <property type="evidence" value="ECO:0000314"/>
    <property type="project" value="UniProtKB"/>
</dbReference>
<dbReference type="GO" id="GO:0045448">
    <property type="term" value="P:mitotic cell cycle, embryonic"/>
    <property type="evidence" value="ECO:0000315"/>
    <property type="project" value="FlyBase"/>
</dbReference>
<dbReference type="GO" id="GO:0051028">
    <property type="term" value="P:mRNA transport"/>
    <property type="evidence" value="ECO:0000315"/>
    <property type="project" value="FlyBase"/>
</dbReference>
<dbReference type="GO" id="GO:0016319">
    <property type="term" value="P:mushroom body development"/>
    <property type="evidence" value="ECO:0000315"/>
    <property type="project" value="FlyBase"/>
</dbReference>
<dbReference type="GO" id="GO:0030517">
    <property type="term" value="P:negative regulation of axon extension"/>
    <property type="evidence" value="ECO:0000316"/>
    <property type="project" value="UniProtKB"/>
</dbReference>
<dbReference type="GO" id="GO:0050774">
    <property type="term" value="P:negative regulation of dendrite morphogenesis"/>
    <property type="evidence" value="ECO:0000315"/>
    <property type="project" value="FlyBase"/>
</dbReference>
<dbReference type="GO" id="GO:0010629">
    <property type="term" value="P:negative regulation of gene expression"/>
    <property type="evidence" value="ECO:0000315"/>
    <property type="project" value="FlyBase"/>
</dbReference>
<dbReference type="GO" id="GO:0046627">
    <property type="term" value="P:negative regulation of insulin receptor signaling pathway"/>
    <property type="evidence" value="ECO:0000315"/>
    <property type="project" value="FlyBase"/>
</dbReference>
<dbReference type="GO" id="GO:2000647">
    <property type="term" value="P:negative regulation of stem cell proliferation"/>
    <property type="evidence" value="ECO:0000315"/>
    <property type="project" value="FlyBase"/>
</dbReference>
<dbReference type="GO" id="GO:0051964">
    <property type="term" value="P:negative regulation of synapse assembly"/>
    <property type="evidence" value="ECO:0000315"/>
    <property type="project" value="FlyBase"/>
</dbReference>
<dbReference type="GO" id="GO:0045886">
    <property type="term" value="P:negative regulation of synaptic assembly at neuromuscular junction"/>
    <property type="evidence" value="ECO:0000315"/>
    <property type="project" value="FlyBase"/>
</dbReference>
<dbReference type="GO" id="GO:0017148">
    <property type="term" value="P:negative regulation of translation"/>
    <property type="evidence" value="ECO:0000314"/>
    <property type="project" value="FlyBase"/>
</dbReference>
<dbReference type="GO" id="GO:0007528">
    <property type="term" value="P:neuromuscular junction development"/>
    <property type="evidence" value="ECO:0000315"/>
    <property type="project" value="FlyBase"/>
</dbReference>
<dbReference type="GO" id="GO:0048812">
    <property type="term" value="P:neuron projection morphogenesis"/>
    <property type="evidence" value="ECO:0000315"/>
    <property type="project" value="FlyBase"/>
</dbReference>
<dbReference type="GO" id="GO:0016322">
    <property type="term" value="P:neuron remodeling"/>
    <property type="evidence" value="ECO:0000315"/>
    <property type="project" value="FlyBase"/>
</dbReference>
<dbReference type="GO" id="GO:0042048">
    <property type="term" value="P:olfactory behavior"/>
    <property type="evidence" value="ECO:0000315"/>
    <property type="project" value="FlyBase"/>
</dbReference>
<dbReference type="GO" id="GO:0008355">
    <property type="term" value="P:olfactory learning"/>
    <property type="evidence" value="ECO:0000315"/>
    <property type="project" value="FlyBase"/>
</dbReference>
<dbReference type="GO" id="GO:0007310">
    <property type="term" value="P:oocyte dorsal/ventral axis specification"/>
    <property type="evidence" value="ECO:0000316"/>
    <property type="project" value="FlyBase"/>
</dbReference>
<dbReference type="GO" id="GO:0007279">
    <property type="term" value="P:pole cell formation"/>
    <property type="evidence" value="ECO:0000315"/>
    <property type="project" value="FlyBase"/>
</dbReference>
<dbReference type="GO" id="GO:0048170">
    <property type="term" value="P:positive regulation of long-term neuronal synaptic plasticity"/>
    <property type="evidence" value="ECO:0000318"/>
    <property type="project" value="GO_Central"/>
</dbReference>
<dbReference type="GO" id="GO:0061014">
    <property type="term" value="P:positive regulation of mRNA catabolic process"/>
    <property type="evidence" value="ECO:0000314"/>
    <property type="project" value="UniProtKB"/>
</dbReference>
<dbReference type="GO" id="GO:0002052">
    <property type="term" value="P:positive regulation of neuroblast proliferation"/>
    <property type="evidence" value="ECO:0000315"/>
    <property type="project" value="FlyBase"/>
</dbReference>
<dbReference type="GO" id="GO:0043068">
    <property type="term" value="P:positive regulation of programmed cell death"/>
    <property type="evidence" value="ECO:0000315"/>
    <property type="project" value="FlyBase"/>
</dbReference>
<dbReference type="GO" id="GO:0045727">
    <property type="term" value="P:positive regulation of translation"/>
    <property type="evidence" value="ECO:0000314"/>
    <property type="project" value="UniProtKB"/>
</dbReference>
<dbReference type="GO" id="GO:0048621">
    <property type="term" value="P:post-embryonic digestive tract morphogenesis"/>
    <property type="evidence" value="ECO:0000315"/>
    <property type="project" value="FlyBase"/>
</dbReference>
<dbReference type="GO" id="GO:0010608">
    <property type="term" value="P:post-transcriptional regulation of gene expression"/>
    <property type="evidence" value="ECO:0000315"/>
    <property type="project" value="FlyBase"/>
</dbReference>
<dbReference type="GO" id="GO:0042127">
    <property type="term" value="P:regulation of cell population proliferation"/>
    <property type="evidence" value="ECO:0000315"/>
    <property type="project" value="FlyBase"/>
</dbReference>
<dbReference type="GO" id="GO:0048814">
    <property type="term" value="P:regulation of dendrite morphogenesis"/>
    <property type="evidence" value="ECO:0000315"/>
    <property type="project" value="FlyBase"/>
</dbReference>
<dbReference type="GO" id="GO:0009794">
    <property type="term" value="P:regulation of mitotic cell cycle, embryonic"/>
    <property type="evidence" value="ECO:0000316"/>
    <property type="project" value="FlyBase"/>
</dbReference>
<dbReference type="GO" id="GO:0031440">
    <property type="term" value="P:regulation of mRNA 3'-end processing"/>
    <property type="evidence" value="ECO:0000315"/>
    <property type="project" value="FlyBase"/>
</dbReference>
<dbReference type="GO" id="GO:0043488">
    <property type="term" value="P:regulation of mRNA stability"/>
    <property type="evidence" value="ECO:0000318"/>
    <property type="project" value="GO_Central"/>
</dbReference>
<dbReference type="GO" id="GO:1900073">
    <property type="term" value="P:regulation of neuromuscular synaptic transmission"/>
    <property type="evidence" value="ECO:0000315"/>
    <property type="project" value="FlyBase"/>
</dbReference>
<dbReference type="GO" id="GO:0090328">
    <property type="term" value="P:regulation of olfactory learning"/>
    <property type="evidence" value="ECO:0000315"/>
    <property type="project" value="FlyBase"/>
</dbReference>
<dbReference type="GO" id="GO:0050807">
    <property type="term" value="P:regulation of synapse organization"/>
    <property type="evidence" value="ECO:0000315"/>
    <property type="project" value="FlyBase"/>
</dbReference>
<dbReference type="GO" id="GO:0051823">
    <property type="term" value="P:regulation of synapse structural plasticity"/>
    <property type="evidence" value="ECO:0000315"/>
    <property type="project" value="FlyBase"/>
</dbReference>
<dbReference type="GO" id="GO:0006417">
    <property type="term" value="P:regulation of translation"/>
    <property type="evidence" value="ECO:0000315"/>
    <property type="project" value="FlyBase"/>
</dbReference>
<dbReference type="GO" id="GO:0099577">
    <property type="term" value="P:regulation of translation at presynapse, modulating synaptic transmission"/>
    <property type="evidence" value="ECO:0000318"/>
    <property type="project" value="GO_Central"/>
</dbReference>
<dbReference type="GO" id="GO:1990834">
    <property type="term" value="P:response to odorant"/>
    <property type="evidence" value="ECO:0000315"/>
    <property type="project" value="FlyBase"/>
</dbReference>
<dbReference type="GO" id="GO:0140965">
    <property type="term" value="P:secondary piRNA processing"/>
    <property type="evidence" value="ECO:0000353"/>
    <property type="project" value="FlyBase"/>
</dbReference>
<dbReference type="GO" id="GO:0007614">
    <property type="term" value="P:short-term memory"/>
    <property type="evidence" value="ECO:0000315"/>
    <property type="project" value="FlyBase"/>
</dbReference>
<dbReference type="GO" id="GO:0035176">
    <property type="term" value="P:social behavior"/>
    <property type="evidence" value="ECO:0000315"/>
    <property type="project" value="FlyBase"/>
</dbReference>
<dbReference type="GO" id="GO:0007288">
    <property type="term" value="P:sperm axoneme assembly"/>
    <property type="evidence" value="ECO:0000315"/>
    <property type="project" value="FlyBase"/>
</dbReference>
<dbReference type="GO" id="GO:0050808">
    <property type="term" value="P:synapse organization"/>
    <property type="evidence" value="ECO:0000315"/>
    <property type="project" value="FlyBase"/>
</dbReference>
<dbReference type="GO" id="GO:0098883">
    <property type="term" value="P:synapse pruning"/>
    <property type="evidence" value="ECO:0000315"/>
    <property type="project" value="FlyBase"/>
</dbReference>
<dbReference type="GO" id="GO:0070142">
    <property type="term" value="P:synaptic vesicle budding"/>
    <property type="evidence" value="ECO:0000315"/>
    <property type="project" value="FlyBase"/>
</dbReference>
<dbReference type="GO" id="GO:0097091">
    <property type="term" value="P:synaptic vesicle clustering"/>
    <property type="evidence" value="ECO:0000315"/>
    <property type="project" value="FlyBase"/>
</dbReference>
<dbReference type="GO" id="GO:0072553">
    <property type="term" value="P:terminal button organization"/>
    <property type="evidence" value="ECO:0000315"/>
    <property type="project" value="FlyBase"/>
</dbReference>
<dbReference type="GO" id="GO:0141008">
    <property type="term" value="P:transposable element silencing by mRNA destabilization"/>
    <property type="evidence" value="ECO:0000305"/>
    <property type="project" value="FlyBase"/>
</dbReference>
<dbReference type="GO" id="GO:0007601">
    <property type="term" value="P:visual perception"/>
    <property type="evidence" value="ECO:0007669"/>
    <property type="project" value="UniProtKB-KW"/>
</dbReference>
<dbReference type="CDD" id="cd22425">
    <property type="entry name" value="KH_I_FMR1_FXR_rpt1"/>
    <property type="match status" value="1"/>
</dbReference>
<dbReference type="CDD" id="cd22426">
    <property type="entry name" value="KH_I_FMR1_FXR_rpt2"/>
    <property type="match status" value="1"/>
</dbReference>
<dbReference type="CDD" id="cd22427">
    <property type="entry name" value="KH_I_FMR1_FXR_rpt3"/>
    <property type="match status" value="1"/>
</dbReference>
<dbReference type="CDD" id="cd20402">
    <property type="entry name" value="Tudor_Agenet_FMRP-like_rpt1"/>
    <property type="match status" value="1"/>
</dbReference>
<dbReference type="FunFam" id="2.30.30.140:FF:000103">
    <property type="entry name" value="Fmr1, isoform J"/>
    <property type="match status" value="1"/>
</dbReference>
<dbReference type="FunFam" id="3.30.1370.10:FF:000004">
    <property type="entry name" value="Fragile X mental retardation 1, isoform CRA_e"/>
    <property type="match status" value="1"/>
</dbReference>
<dbReference type="FunFam" id="3.30.1370.10:FF:000054">
    <property type="entry name" value="Fragile X mental retardation protein 1"/>
    <property type="match status" value="1"/>
</dbReference>
<dbReference type="Gene3D" id="2.30.30.140">
    <property type="match status" value="2"/>
</dbReference>
<dbReference type="Gene3D" id="3.30.1370.10">
    <property type="entry name" value="K Homology domain, type 1"/>
    <property type="match status" value="2"/>
</dbReference>
<dbReference type="InterPro" id="IPR040148">
    <property type="entry name" value="FMR1"/>
</dbReference>
<dbReference type="InterPro" id="IPR022034">
    <property type="entry name" value="FMR1-like_C_core"/>
</dbReference>
<dbReference type="InterPro" id="IPR040472">
    <property type="entry name" value="FMRP_KH0"/>
</dbReference>
<dbReference type="InterPro" id="IPR004087">
    <property type="entry name" value="KH_dom"/>
</dbReference>
<dbReference type="InterPro" id="IPR004088">
    <property type="entry name" value="KH_dom_type_1"/>
</dbReference>
<dbReference type="InterPro" id="IPR036612">
    <property type="entry name" value="KH_dom_type_1_sf"/>
</dbReference>
<dbReference type="InterPro" id="IPR041560">
    <property type="entry name" value="Tudor_FRM1"/>
</dbReference>
<dbReference type="PANTHER" id="PTHR10603">
    <property type="entry name" value="FRAGILE X MENTAL RETARDATION SYNDROME-RELATED PROTEIN"/>
    <property type="match status" value="1"/>
</dbReference>
<dbReference type="PANTHER" id="PTHR10603:SF7">
    <property type="entry name" value="FRAGILE X MESSENGER RIBONUCLEOPROTEIN 1 HOMOLOG"/>
    <property type="match status" value="1"/>
</dbReference>
<dbReference type="Pfam" id="PF12235">
    <property type="entry name" value="FXMRP1_C_core"/>
    <property type="match status" value="1"/>
</dbReference>
<dbReference type="Pfam" id="PF00013">
    <property type="entry name" value="KH_1"/>
    <property type="match status" value="2"/>
</dbReference>
<dbReference type="Pfam" id="PF17904">
    <property type="entry name" value="KH_9"/>
    <property type="match status" value="1"/>
</dbReference>
<dbReference type="Pfam" id="PF18336">
    <property type="entry name" value="Tudor_FRX1"/>
    <property type="match status" value="1"/>
</dbReference>
<dbReference type="SMART" id="SM00322">
    <property type="entry name" value="KH"/>
    <property type="match status" value="2"/>
</dbReference>
<dbReference type="SUPFAM" id="SSF54791">
    <property type="entry name" value="Eukaryotic type KH-domain (KH-domain type I)"/>
    <property type="match status" value="2"/>
</dbReference>
<dbReference type="PROSITE" id="PS51641">
    <property type="entry name" value="AGENET_LIKE"/>
    <property type="match status" value="2"/>
</dbReference>
<dbReference type="PROSITE" id="PS50084">
    <property type="entry name" value="KH_TYPE_1"/>
    <property type="match status" value="2"/>
</dbReference>